<feature type="chain" id="PRO_1000009129" description="N-acetylmuramic acid 6-phosphate etherase">
    <location>
        <begin position="1"/>
        <end position="316"/>
    </location>
</feature>
<feature type="domain" description="SIS" evidence="1">
    <location>
        <begin position="68"/>
        <end position="231"/>
    </location>
</feature>
<feature type="active site" description="Proton donor" evidence="1">
    <location>
        <position position="96"/>
    </location>
</feature>
<feature type="active site" evidence="1">
    <location>
        <position position="127"/>
    </location>
</feature>
<keyword id="KW-0119">Carbohydrate metabolism</keyword>
<keyword id="KW-0456">Lyase</keyword>
<comment type="function">
    <text evidence="1">Specifically catalyzes the cleavage of the D-lactyl ether substituent of MurNAc 6-phosphate, producing GlcNAc 6-phosphate and D-lactate.</text>
</comment>
<comment type="catalytic activity">
    <reaction evidence="1">
        <text>N-acetyl-D-muramate 6-phosphate + H2O = N-acetyl-D-glucosamine 6-phosphate + (R)-lactate</text>
        <dbReference type="Rhea" id="RHEA:26410"/>
        <dbReference type="ChEBI" id="CHEBI:15377"/>
        <dbReference type="ChEBI" id="CHEBI:16004"/>
        <dbReference type="ChEBI" id="CHEBI:57513"/>
        <dbReference type="ChEBI" id="CHEBI:58722"/>
        <dbReference type="EC" id="4.2.1.126"/>
    </reaction>
</comment>
<comment type="pathway">
    <text evidence="1">Amino-sugar metabolism; N-acetylmuramate degradation.</text>
</comment>
<comment type="subunit">
    <text evidence="1">Homodimer.</text>
</comment>
<comment type="miscellaneous">
    <text evidence="1">A lyase-type mechanism (elimination/hydration) is suggested for the cleavage of the lactyl ether bond of MurNAc 6-phosphate, with the formation of an alpha,beta-unsaturated aldehyde intermediate with (E)-stereochemistry, followed by the syn addition of water to give product.</text>
</comment>
<comment type="similarity">
    <text evidence="1">Belongs to the GCKR-like family. MurNAc-6-P etherase subfamily.</text>
</comment>
<reference key="1">
    <citation type="journal article" date="2007" name="PLoS Genet.">
        <title>Patterns and implications of gene gain and loss in the evolution of Prochlorococcus.</title>
        <authorList>
            <person name="Kettler G.C."/>
            <person name="Martiny A.C."/>
            <person name="Huang K."/>
            <person name="Zucker J."/>
            <person name="Coleman M.L."/>
            <person name="Rodrigue S."/>
            <person name="Chen F."/>
            <person name="Lapidus A."/>
            <person name="Ferriera S."/>
            <person name="Johnson J."/>
            <person name="Steglich C."/>
            <person name="Church G.M."/>
            <person name="Richardson P."/>
            <person name="Chisholm S.W."/>
        </authorList>
    </citation>
    <scope>NUCLEOTIDE SEQUENCE [LARGE SCALE GENOMIC DNA]</scope>
    <source>
        <strain>MIT 9303</strain>
    </source>
</reference>
<accession>A2C9U9</accession>
<organism>
    <name type="scientific">Prochlorococcus marinus (strain MIT 9303)</name>
    <dbReference type="NCBI Taxonomy" id="59922"/>
    <lineage>
        <taxon>Bacteria</taxon>
        <taxon>Bacillati</taxon>
        <taxon>Cyanobacteriota</taxon>
        <taxon>Cyanophyceae</taxon>
        <taxon>Synechococcales</taxon>
        <taxon>Prochlorococcaceae</taxon>
        <taxon>Prochlorococcus</taxon>
    </lineage>
</organism>
<proteinExistence type="inferred from homology"/>
<evidence type="ECO:0000255" key="1">
    <source>
        <dbReference type="HAMAP-Rule" id="MF_00068"/>
    </source>
</evidence>
<sequence length="316" mass="33456">MTNLFEHINLHPSDDRGHLLTEQVNPKSECLDQLSTESLVTLFCEEDREPQRAVAAAIPELIQAVEAITDRLRSGGRLFYLGAGTSGRLGVLDAAECPPTFCSDPDLVQGVLAGGSSALLKSSEGLEDIEQAGQKDLQQRGFSSADCLVGIAAGGTTPYVKGGLAYAKEINALAIAISCVPIEQAELPCSIDIRLLTGPELLTGSTRLKAGTATKMALNILSTCAMVRLGKVFGNRMVDVAATNIKLMDRALRILHDLADVDRDRGSELLQASDGSVKVALLMHACGLDAEAAQKLLIEQNNQLRTALASCGNCIS</sequence>
<protein>
    <recommendedName>
        <fullName evidence="1">N-acetylmuramic acid 6-phosphate etherase</fullName>
        <shortName evidence="1">MurNAc-6-P etherase</shortName>
        <ecNumber evidence="1">4.2.1.126</ecNumber>
    </recommendedName>
    <alternativeName>
        <fullName evidence="1">N-acetylmuramic acid 6-phosphate hydrolase</fullName>
    </alternativeName>
    <alternativeName>
        <fullName evidence="1">N-acetylmuramic acid 6-phosphate lyase</fullName>
    </alternativeName>
</protein>
<dbReference type="EC" id="4.2.1.126" evidence="1"/>
<dbReference type="EMBL" id="CP000554">
    <property type="protein sequence ID" value="ABM78259.1"/>
    <property type="molecule type" value="Genomic_DNA"/>
</dbReference>
<dbReference type="RefSeq" id="WP_011826152.1">
    <property type="nucleotide sequence ID" value="NC_008820.1"/>
</dbReference>
<dbReference type="SMR" id="A2C9U9"/>
<dbReference type="STRING" id="59922.P9303_15151"/>
<dbReference type="KEGG" id="pmf:P9303_15151"/>
<dbReference type="HOGENOM" id="CLU_049049_1_1_3"/>
<dbReference type="BioCyc" id="PMAR59922:G1G80-1312-MONOMER"/>
<dbReference type="UniPathway" id="UPA00342"/>
<dbReference type="Proteomes" id="UP000002274">
    <property type="component" value="Chromosome"/>
</dbReference>
<dbReference type="GO" id="GO:0097367">
    <property type="term" value="F:carbohydrate derivative binding"/>
    <property type="evidence" value="ECO:0007669"/>
    <property type="project" value="InterPro"/>
</dbReference>
<dbReference type="GO" id="GO:0016835">
    <property type="term" value="F:carbon-oxygen lyase activity"/>
    <property type="evidence" value="ECO:0007669"/>
    <property type="project" value="UniProtKB-UniRule"/>
</dbReference>
<dbReference type="GO" id="GO:0016803">
    <property type="term" value="F:ether hydrolase activity"/>
    <property type="evidence" value="ECO:0007669"/>
    <property type="project" value="TreeGrafter"/>
</dbReference>
<dbReference type="GO" id="GO:0046348">
    <property type="term" value="P:amino sugar catabolic process"/>
    <property type="evidence" value="ECO:0007669"/>
    <property type="project" value="InterPro"/>
</dbReference>
<dbReference type="GO" id="GO:0097173">
    <property type="term" value="P:N-acetylmuramic acid catabolic process"/>
    <property type="evidence" value="ECO:0007669"/>
    <property type="project" value="UniProtKB-UniPathway"/>
</dbReference>
<dbReference type="GO" id="GO:0009254">
    <property type="term" value="P:peptidoglycan turnover"/>
    <property type="evidence" value="ECO:0007669"/>
    <property type="project" value="TreeGrafter"/>
</dbReference>
<dbReference type="CDD" id="cd05007">
    <property type="entry name" value="SIS_Etherase"/>
    <property type="match status" value="1"/>
</dbReference>
<dbReference type="FunFam" id="3.40.50.10490:FF:000014">
    <property type="entry name" value="N-acetylmuramic acid 6-phosphate etherase"/>
    <property type="match status" value="1"/>
</dbReference>
<dbReference type="Gene3D" id="1.10.8.1080">
    <property type="match status" value="1"/>
</dbReference>
<dbReference type="Gene3D" id="3.40.50.10490">
    <property type="entry name" value="Glucose-6-phosphate isomerase like protein, domain 1"/>
    <property type="match status" value="2"/>
</dbReference>
<dbReference type="HAMAP" id="MF_00068">
    <property type="entry name" value="MurQ"/>
    <property type="match status" value="1"/>
</dbReference>
<dbReference type="InterPro" id="IPR005488">
    <property type="entry name" value="Etherase_MurQ"/>
</dbReference>
<dbReference type="InterPro" id="IPR005486">
    <property type="entry name" value="Glucokinase_regulatory_CS"/>
</dbReference>
<dbReference type="InterPro" id="IPR040190">
    <property type="entry name" value="MURQ/GCKR"/>
</dbReference>
<dbReference type="InterPro" id="IPR001347">
    <property type="entry name" value="SIS_dom"/>
</dbReference>
<dbReference type="InterPro" id="IPR046348">
    <property type="entry name" value="SIS_dom_sf"/>
</dbReference>
<dbReference type="NCBIfam" id="TIGR00274">
    <property type="entry name" value="N-acetylmuramic acid 6-phosphate etherase"/>
    <property type="match status" value="1"/>
</dbReference>
<dbReference type="NCBIfam" id="NF003915">
    <property type="entry name" value="PRK05441.1"/>
    <property type="match status" value="1"/>
</dbReference>
<dbReference type="NCBIfam" id="NF009222">
    <property type="entry name" value="PRK12570.1"/>
    <property type="match status" value="1"/>
</dbReference>
<dbReference type="PANTHER" id="PTHR10088">
    <property type="entry name" value="GLUCOKINASE REGULATORY PROTEIN"/>
    <property type="match status" value="1"/>
</dbReference>
<dbReference type="PANTHER" id="PTHR10088:SF4">
    <property type="entry name" value="GLUCOKINASE REGULATORY PROTEIN"/>
    <property type="match status" value="1"/>
</dbReference>
<dbReference type="Pfam" id="PF22645">
    <property type="entry name" value="GKRP_SIS_N"/>
    <property type="match status" value="1"/>
</dbReference>
<dbReference type="SUPFAM" id="SSF53697">
    <property type="entry name" value="SIS domain"/>
    <property type="match status" value="1"/>
</dbReference>
<dbReference type="PROSITE" id="PS01272">
    <property type="entry name" value="GCKR"/>
    <property type="match status" value="1"/>
</dbReference>
<dbReference type="PROSITE" id="PS51464">
    <property type="entry name" value="SIS"/>
    <property type="match status" value="1"/>
</dbReference>
<gene>
    <name evidence="1" type="primary">murQ</name>
    <name type="ordered locus">P9303_15151</name>
</gene>
<name>MURQ_PROM3</name>